<gene>
    <name evidence="1" type="primary">cysS</name>
    <name type="ordered locus">Helmi_13090</name>
    <name type="ORF">HM1_1357</name>
</gene>
<comment type="catalytic activity">
    <reaction evidence="1">
        <text>tRNA(Cys) + L-cysteine + ATP = L-cysteinyl-tRNA(Cys) + AMP + diphosphate</text>
        <dbReference type="Rhea" id="RHEA:17773"/>
        <dbReference type="Rhea" id="RHEA-COMP:9661"/>
        <dbReference type="Rhea" id="RHEA-COMP:9679"/>
        <dbReference type="ChEBI" id="CHEBI:30616"/>
        <dbReference type="ChEBI" id="CHEBI:33019"/>
        <dbReference type="ChEBI" id="CHEBI:35235"/>
        <dbReference type="ChEBI" id="CHEBI:78442"/>
        <dbReference type="ChEBI" id="CHEBI:78517"/>
        <dbReference type="ChEBI" id="CHEBI:456215"/>
        <dbReference type="EC" id="6.1.1.16"/>
    </reaction>
</comment>
<comment type="cofactor">
    <cofactor evidence="1">
        <name>Zn(2+)</name>
        <dbReference type="ChEBI" id="CHEBI:29105"/>
    </cofactor>
    <text evidence="1">Binds 1 zinc ion per subunit.</text>
</comment>
<comment type="subunit">
    <text evidence="1">Monomer.</text>
</comment>
<comment type="subcellular location">
    <subcellularLocation>
        <location evidence="1">Cytoplasm</location>
    </subcellularLocation>
</comment>
<comment type="similarity">
    <text evidence="1">Belongs to the class-I aminoacyl-tRNA synthetase family.</text>
</comment>
<organism>
    <name type="scientific">Heliobacterium modesticaldum (strain ATCC 51547 / Ice1)</name>
    <dbReference type="NCBI Taxonomy" id="498761"/>
    <lineage>
        <taxon>Bacteria</taxon>
        <taxon>Bacillati</taxon>
        <taxon>Bacillota</taxon>
        <taxon>Clostridia</taxon>
        <taxon>Eubacteriales</taxon>
        <taxon>Heliobacteriaceae</taxon>
        <taxon>Heliomicrobium</taxon>
    </lineage>
</organism>
<keyword id="KW-0030">Aminoacyl-tRNA synthetase</keyword>
<keyword id="KW-0067">ATP-binding</keyword>
<keyword id="KW-0963">Cytoplasm</keyword>
<keyword id="KW-0436">Ligase</keyword>
<keyword id="KW-0479">Metal-binding</keyword>
<keyword id="KW-0547">Nucleotide-binding</keyword>
<keyword id="KW-0648">Protein biosynthesis</keyword>
<keyword id="KW-1185">Reference proteome</keyword>
<keyword id="KW-0862">Zinc</keyword>
<accession>B0TC35</accession>
<dbReference type="EC" id="6.1.1.16" evidence="1"/>
<dbReference type="EMBL" id="CP000930">
    <property type="protein sequence ID" value="ABZ83934.1"/>
    <property type="molecule type" value="Genomic_DNA"/>
</dbReference>
<dbReference type="SMR" id="B0TC35"/>
<dbReference type="STRING" id="498761.HM1_1357"/>
<dbReference type="KEGG" id="hmo:HM1_1357"/>
<dbReference type="eggNOG" id="COG0215">
    <property type="taxonomic scope" value="Bacteria"/>
</dbReference>
<dbReference type="HOGENOM" id="CLU_013528_0_1_9"/>
<dbReference type="OrthoDB" id="9815130at2"/>
<dbReference type="Proteomes" id="UP000008550">
    <property type="component" value="Chromosome"/>
</dbReference>
<dbReference type="GO" id="GO:0005829">
    <property type="term" value="C:cytosol"/>
    <property type="evidence" value="ECO:0007669"/>
    <property type="project" value="TreeGrafter"/>
</dbReference>
<dbReference type="GO" id="GO:0005524">
    <property type="term" value="F:ATP binding"/>
    <property type="evidence" value="ECO:0007669"/>
    <property type="project" value="UniProtKB-UniRule"/>
</dbReference>
<dbReference type="GO" id="GO:0004817">
    <property type="term" value="F:cysteine-tRNA ligase activity"/>
    <property type="evidence" value="ECO:0007669"/>
    <property type="project" value="UniProtKB-UniRule"/>
</dbReference>
<dbReference type="GO" id="GO:0008270">
    <property type="term" value="F:zinc ion binding"/>
    <property type="evidence" value="ECO:0007669"/>
    <property type="project" value="UniProtKB-UniRule"/>
</dbReference>
<dbReference type="GO" id="GO:0006423">
    <property type="term" value="P:cysteinyl-tRNA aminoacylation"/>
    <property type="evidence" value="ECO:0007669"/>
    <property type="project" value="UniProtKB-UniRule"/>
</dbReference>
<dbReference type="CDD" id="cd00672">
    <property type="entry name" value="CysRS_core"/>
    <property type="match status" value="1"/>
</dbReference>
<dbReference type="FunFam" id="3.40.50.620:FF:000009">
    <property type="entry name" value="Cysteine--tRNA ligase"/>
    <property type="match status" value="1"/>
</dbReference>
<dbReference type="Gene3D" id="1.20.120.1910">
    <property type="entry name" value="Cysteine-tRNA ligase, C-terminal anti-codon recognition domain"/>
    <property type="match status" value="1"/>
</dbReference>
<dbReference type="Gene3D" id="3.40.50.620">
    <property type="entry name" value="HUPs"/>
    <property type="match status" value="1"/>
</dbReference>
<dbReference type="HAMAP" id="MF_00041">
    <property type="entry name" value="Cys_tRNA_synth"/>
    <property type="match status" value="1"/>
</dbReference>
<dbReference type="InterPro" id="IPR015803">
    <property type="entry name" value="Cys-tRNA-ligase"/>
</dbReference>
<dbReference type="InterPro" id="IPR015273">
    <property type="entry name" value="Cys-tRNA-synt_Ia_DALR"/>
</dbReference>
<dbReference type="InterPro" id="IPR024909">
    <property type="entry name" value="Cys-tRNA/MSH_ligase"/>
</dbReference>
<dbReference type="InterPro" id="IPR056411">
    <property type="entry name" value="CysS_C"/>
</dbReference>
<dbReference type="InterPro" id="IPR014729">
    <property type="entry name" value="Rossmann-like_a/b/a_fold"/>
</dbReference>
<dbReference type="InterPro" id="IPR032678">
    <property type="entry name" value="tRNA-synt_1_cat_dom"/>
</dbReference>
<dbReference type="InterPro" id="IPR009080">
    <property type="entry name" value="tRNAsynth_Ia_anticodon-bd"/>
</dbReference>
<dbReference type="NCBIfam" id="TIGR00435">
    <property type="entry name" value="cysS"/>
    <property type="match status" value="1"/>
</dbReference>
<dbReference type="PANTHER" id="PTHR10890:SF3">
    <property type="entry name" value="CYSTEINE--TRNA LIGASE, CYTOPLASMIC"/>
    <property type="match status" value="1"/>
</dbReference>
<dbReference type="PANTHER" id="PTHR10890">
    <property type="entry name" value="CYSTEINYL-TRNA SYNTHETASE"/>
    <property type="match status" value="1"/>
</dbReference>
<dbReference type="Pfam" id="PF23493">
    <property type="entry name" value="CysS_C"/>
    <property type="match status" value="1"/>
</dbReference>
<dbReference type="Pfam" id="PF09190">
    <property type="entry name" value="DALR_2"/>
    <property type="match status" value="1"/>
</dbReference>
<dbReference type="Pfam" id="PF01406">
    <property type="entry name" value="tRNA-synt_1e"/>
    <property type="match status" value="1"/>
</dbReference>
<dbReference type="PRINTS" id="PR00983">
    <property type="entry name" value="TRNASYNTHCYS"/>
</dbReference>
<dbReference type="SMART" id="SM00840">
    <property type="entry name" value="DALR_2"/>
    <property type="match status" value="1"/>
</dbReference>
<dbReference type="SUPFAM" id="SSF47323">
    <property type="entry name" value="Anticodon-binding domain of a subclass of class I aminoacyl-tRNA synthetases"/>
    <property type="match status" value="1"/>
</dbReference>
<dbReference type="SUPFAM" id="SSF52374">
    <property type="entry name" value="Nucleotidylyl transferase"/>
    <property type="match status" value="1"/>
</dbReference>
<feature type="chain" id="PRO_1000090842" description="Cysteine--tRNA ligase">
    <location>
        <begin position="1"/>
        <end position="481"/>
    </location>
</feature>
<feature type="short sequence motif" description="'HIGH' region">
    <location>
        <begin position="31"/>
        <end position="41"/>
    </location>
</feature>
<feature type="short sequence motif" description="'KMSKS' region">
    <location>
        <begin position="267"/>
        <end position="271"/>
    </location>
</feature>
<feature type="binding site" evidence="1">
    <location>
        <position position="29"/>
    </location>
    <ligand>
        <name>Zn(2+)</name>
        <dbReference type="ChEBI" id="CHEBI:29105"/>
    </ligand>
</feature>
<feature type="binding site" evidence="1">
    <location>
        <position position="209"/>
    </location>
    <ligand>
        <name>Zn(2+)</name>
        <dbReference type="ChEBI" id="CHEBI:29105"/>
    </ligand>
</feature>
<feature type="binding site" evidence="1">
    <location>
        <position position="234"/>
    </location>
    <ligand>
        <name>Zn(2+)</name>
        <dbReference type="ChEBI" id="CHEBI:29105"/>
    </ligand>
</feature>
<feature type="binding site" evidence="1">
    <location>
        <position position="238"/>
    </location>
    <ligand>
        <name>Zn(2+)</name>
        <dbReference type="ChEBI" id="CHEBI:29105"/>
    </ligand>
</feature>
<feature type="binding site" evidence="1">
    <location>
        <position position="270"/>
    </location>
    <ligand>
        <name>ATP</name>
        <dbReference type="ChEBI" id="CHEBI:30616"/>
    </ligand>
</feature>
<protein>
    <recommendedName>
        <fullName evidence="1">Cysteine--tRNA ligase</fullName>
        <ecNumber evidence="1">6.1.1.16</ecNumber>
    </recommendedName>
    <alternativeName>
        <fullName evidence="1">Cysteinyl-tRNA synthetase</fullName>
        <shortName evidence="1">CysRS</shortName>
    </alternativeName>
</protein>
<evidence type="ECO:0000255" key="1">
    <source>
        <dbReference type="HAMAP-Rule" id="MF_00041"/>
    </source>
</evidence>
<sequence>MSLRVYNTLSREKETFVPHKAGRVGMYVCGPTTYDYIHLGNARPLVVFDTIRRYLEHVGYEVVYIQNFTDIDDKIIHRAKEIGEDPIAMAARFVEEYYRDAKALNVRPATIHPKVSAHMAEIIAMIGVLVEKGHAYELGGDVYFSIPSFKDYGKLSGRSLEDLQAGARVDVNERKRHPMDFALWKGAKPGEPSWDSPWGKGRPGWHIECSAMSRKYLGDAFDIHGGGQDLIFPHHENEIAQSEACTGTSPMARYWLHNGFITVNQEKMSKSLGNFFTLREILKRFPGDVIRFYLLSTHYRSPIDFDDSKLEAAQKGLQRLRTSRRLIEEALAASGKEGAERPAGQREKLEEQWLAAKKGFREAMDDDFNTALALSMLFDLAREANTFLHGGFALTPEDRQLLLQVAETFEELAGVLGIDLAGGAAAADDNTVDGLMNLLIGIRAEARKKKDWATADRIRDGLKELGIVIEDTPQGARWKKA</sequence>
<name>SYC_HELMI</name>
<proteinExistence type="inferred from homology"/>
<reference key="1">
    <citation type="journal article" date="2008" name="J. Bacteriol.">
        <title>The genome of Heliobacterium modesticaldum, a phototrophic representative of the Firmicutes containing the simplest photosynthetic apparatus.</title>
        <authorList>
            <person name="Sattley W.M."/>
            <person name="Madigan M.T."/>
            <person name="Swingley W.D."/>
            <person name="Cheung P.C."/>
            <person name="Clocksin K.M."/>
            <person name="Conrad A.L."/>
            <person name="Dejesa L.C."/>
            <person name="Honchak B.M."/>
            <person name="Jung D.O."/>
            <person name="Karbach L.E."/>
            <person name="Kurdoglu A."/>
            <person name="Lahiri S."/>
            <person name="Mastrian S.D."/>
            <person name="Page L.E."/>
            <person name="Taylor H.L."/>
            <person name="Wang Z.T."/>
            <person name="Raymond J."/>
            <person name="Chen M."/>
            <person name="Blankenship R.E."/>
            <person name="Touchman J.W."/>
        </authorList>
    </citation>
    <scope>NUCLEOTIDE SEQUENCE [LARGE SCALE GENOMIC DNA]</scope>
    <source>
        <strain>ATCC 51547 / Ice1</strain>
    </source>
</reference>